<organism>
    <name type="scientific">Paracidovorax citrulli (strain AAC00-1)</name>
    <name type="common">Acidovorax citrulli</name>
    <dbReference type="NCBI Taxonomy" id="397945"/>
    <lineage>
        <taxon>Bacteria</taxon>
        <taxon>Pseudomonadati</taxon>
        <taxon>Pseudomonadota</taxon>
        <taxon>Betaproteobacteria</taxon>
        <taxon>Burkholderiales</taxon>
        <taxon>Comamonadaceae</taxon>
        <taxon>Paracidovorax</taxon>
    </lineage>
</organism>
<proteinExistence type="inferred from homology"/>
<feature type="chain" id="PRO_1000070641" description="Urease subunit alpha">
    <location>
        <begin position="1"/>
        <end position="572"/>
    </location>
</feature>
<feature type="domain" description="Urease" evidence="1">
    <location>
        <begin position="134"/>
        <end position="572"/>
    </location>
</feature>
<feature type="active site" description="Proton donor" evidence="1">
    <location>
        <position position="325"/>
    </location>
</feature>
<feature type="binding site" evidence="1">
    <location>
        <position position="139"/>
    </location>
    <ligand>
        <name>Ni(2+)</name>
        <dbReference type="ChEBI" id="CHEBI:49786"/>
        <label>1</label>
    </ligand>
</feature>
<feature type="binding site" evidence="1">
    <location>
        <position position="141"/>
    </location>
    <ligand>
        <name>Ni(2+)</name>
        <dbReference type="ChEBI" id="CHEBI:49786"/>
        <label>1</label>
    </ligand>
</feature>
<feature type="binding site" description="via carbamate group" evidence="1">
    <location>
        <position position="222"/>
    </location>
    <ligand>
        <name>Ni(2+)</name>
        <dbReference type="ChEBI" id="CHEBI:49786"/>
        <label>1</label>
    </ligand>
</feature>
<feature type="binding site" description="via carbamate group" evidence="1">
    <location>
        <position position="222"/>
    </location>
    <ligand>
        <name>Ni(2+)</name>
        <dbReference type="ChEBI" id="CHEBI:49786"/>
        <label>2</label>
    </ligand>
</feature>
<feature type="binding site" evidence="1">
    <location>
        <position position="224"/>
    </location>
    <ligand>
        <name>substrate</name>
    </ligand>
</feature>
<feature type="binding site" evidence="1">
    <location>
        <position position="251"/>
    </location>
    <ligand>
        <name>Ni(2+)</name>
        <dbReference type="ChEBI" id="CHEBI:49786"/>
        <label>2</label>
    </ligand>
</feature>
<feature type="binding site" evidence="1">
    <location>
        <position position="277"/>
    </location>
    <ligand>
        <name>Ni(2+)</name>
        <dbReference type="ChEBI" id="CHEBI:49786"/>
        <label>2</label>
    </ligand>
</feature>
<feature type="binding site" evidence="1">
    <location>
        <position position="365"/>
    </location>
    <ligand>
        <name>Ni(2+)</name>
        <dbReference type="ChEBI" id="CHEBI:49786"/>
        <label>1</label>
    </ligand>
</feature>
<feature type="modified residue" description="N6-carboxylysine" evidence="1">
    <location>
        <position position="222"/>
    </location>
</feature>
<dbReference type="EC" id="3.5.1.5" evidence="1"/>
<dbReference type="EMBL" id="CP000512">
    <property type="protein sequence ID" value="ABM34084.1"/>
    <property type="molecule type" value="Genomic_DNA"/>
</dbReference>
<dbReference type="RefSeq" id="WP_011796581.1">
    <property type="nucleotide sequence ID" value="NC_008752.1"/>
</dbReference>
<dbReference type="SMR" id="A1TSZ6"/>
<dbReference type="STRING" id="397945.Aave_3529"/>
<dbReference type="MEROPS" id="M38.982"/>
<dbReference type="GeneID" id="79791587"/>
<dbReference type="KEGG" id="aav:Aave_3529"/>
<dbReference type="eggNOG" id="COG0804">
    <property type="taxonomic scope" value="Bacteria"/>
</dbReference>
<dbReference type="HOGENOM" id="CLU_000980_0_0_4"/>
<dbReference type="OrthoDB" id="9802793at2"/>
<dbReference type="UniPathway" id="UPA00258">
    <property type="reaction ID" value="UER00370"/>
</dbReference>
<dbReference type="Proteomes" id="UP000002596">
    <property type="component" value="Chromosome"/>
</dbReference>
<dbReference type="GO" id="GO:0005737">
    <property type="term" value="C:cytoplasm"/>
    <property type="evidence" value="ECO:0007669"/>
    <property type="project" value="UniProtKB-SubCell"/>
</dbReference>
<dbReference type="GO" id="GO:0016151">
    <property type="term" value="F:nickel cation binding"/>
    <property type="evidence" value="ECO:0007669"/>
    <property type="project" value="UniProtKB-UniRule"/>
</dbReference>
<dbReference type="GO" id="GO:0009039">
    <property type="term" value="F:urease activity"/>
    <property type="evidence" value="ECO:0007669"/>
    <property type="project" value="UniProtKB-UniRule"/>
</dbReference>
<dbReference type="GO" id="GO:0043419">
    <property type="term" value="P:urea catabolic process"/>
    <property type="evidence" value="ECO:0007669"/>
    <property type="project" value="UniProtKB-UniRule"/>
</dbReference>
<dbReference type="CDD" id="cd00375">
    <property type="entry name" value="Urease_alpha"/>
    <property type="match status" value="1"/>
</dbReference>
<dbReference type="Gene3D" id="3.20.20.140">
    <property type="entry name" value="Metal-dependent hydrolases"/>
    <property type="match status" value="1"/>
</dbReference>
<dbReference type="Gene3D" id="2.30.40.10">
    <property type="entry name" value="Urease, subunit C, domain 1"/>
    <property type="match status" value="1"/>
</dbReference>
<dbReference type="HAMAP" id="MF_01953">
    <property type="entry name" value="Urease_alpha"/>
    <property type="match status" value="1"/>
</dbReference>
<dbReference type="InterPro" id="IPR006680">
    <property type="entry name" value="Amidohydro-rel"/>
</dbReference>
<dbReference type="InterPro" id="IPR011059">
    <property type="entry name" value="Metal-dep_hydrolase_composite"/>
</dbReference>
<dbReference type="InterPro" id="IPR032466">
    <property type="entry name" value="Metal_Hydrolase"/>
</dbReference>
<dbReference type="InterPro" id="IPR011612">
    <property type="entry name" value="Urease_alpha_N_dom"/>
</dbReference>
<dbReference type="InterPro" id="IPR050112">
    <property type="entry name" value="Urease_alpha_subunit"/>
</dbReference>
<dbReference type="InterPro" id="IPR017950">
    <property type="entry name" value="Urease_AS"/>
</dbReference>
<dbReference type="InterPro" id="IPR005848">
    <property type="entry name" value="Urease_asu"/>
</dbReference>
<dbReference type="InterPro" id="IPR017951">
    <property type="entry name" value="Urease_asu_c"/>
</dbReference>
<dbReference type="InterPro" id="IPR029754">
    <property type="entry name" value="Urease_Ni-bd"/>
</dbReference>
<dbReference type="NCBIfam" id="NF009685">
    <property type="entry name" value="PRK13206.1"/>
    <property type="match status" value="1"/>
</dbReference>
<dbReference type="NCBIfam" id="NF009686">
    <property type="entry name" value="PRK13207.1"/>
    <property type="match status" value="1"/>
</dbReference>
<dbReference type="NCBIfam" id="TIGR01792">
    <property type="entry name" value="urease_alph"/>
    <property type="match status" value="1"/>
</dbReference>
<dbReference type="PANTHER" id="PTHR43440">
    <property type="entry name" value="UREASE"/>
    <property type="match status" value="1"/>
</dbReference>
<dbReference type="PANTHER" id="PTHR43440:SF1">
    <property type="entry name" value="UREASE"/>
    <property type="match status" value="1"/>
</dbReference>
<dbReference type="Pfam" id="PF01979">
    <property type="entry name" value="Amidohydro_1"/>
    <property type="match status" value="1"/>
</dbReference>
<dbReference type="Pfam" id="PF00449">
    <property type="entry name" value="Urease_alpha"/>
    <property type="match status" value="1"/>
</dbReference>
<dbReference type="PRINTS" id="PR01752">
    <property type="entry name" value="UREASE"/>
</dbReference>
<dbReference type="SUPFAM" id="SSF51338">
    <property type="entry name" value="Composite domain of metallo-dependent hydrolases"/>
    <property type="match status" value="2"/>
</dbReference>
<dbReference type="SUPFAM" id="SSF51556">
    <property type="entry name" value="Metallo-dependent hydrolases"/>
    <property type="match status" value="1"/>
</dbReference>
<dbReference type="PROSITE" id="PS01120">
    <property type="entry name" value="UREASE_1"/>
    <property type="match status" value="1"/>
</dbReference>
<dbReference type="PROSITE" id="PS00145">
    <property type="entry name" value="UREASE_2"/>
    <property type="match status" value="1"/>
</dbReference>
<dbReference type="PROSITE" id="PS51368">
    <property type="entry name" value="UREASE_3"/>
    <property type="match status" value="1"/>
</dbReference>
<gene>
    <name evidence="1" type="primary">ureC</name>
    <name type="ordered locus">Aave_3529</name>
</gene>
<reference key="1">
    <citation type="submission" date="2006-12" db="EMBL/GenBank/DDBJ databases">
        <title>Complete sequence of Acidovorax avenae subsp. citrulli AAC00-1.</title>
        <authorList>
            <person name="Copeland A."/>
            <person name="Lucas S."/>
            <person name="Lapidus A."/>
            <person name="Barry K."/>
            <person name="Detter J.C."/>
            <person name="Glavina del Rio T."/>
            <person name="Dalin E."/>
            <person name="Tice H."/>
            <person name="Pitluck S."/>
            <person name="Kiss H."/>
            <person name="Brettin T."/>
            <person name="Bruce D."/>
            <person name="Han C."/>
            <person name="Tapia R."/>
            <person name="Gilna P."/>
            <person name="Schmutz J."/>
            <person name="Larimer F."/>
            <person name="Land M."/>
            <person name="Hauser L."/>
            <person name="Kyrpides N."/>
            <person name="Kim E."/>
            <person name="Stahl D."/>
            <person name="Richardson P."/>
        </authorList>
    </citation>
    <scope>NUCLEOTIDE SEQUENCE [LARGE SCALE GENOMIC DNA]</scope>
    <source>
        <strain>AAC00-1</strain>
    </source>
</reference>
<name>URE1_PARC0</name>
<protein>
    <recommendedName>
        <fullName evidence="1">Urease subunit alpha</fullName>
        <ecNumber evidence="1">3.5.1.5</ecNumber>
    </recommendedName>
    <alternativeName>
        <fullName evidence="1">Urea amidohydrolase subunit alpha</fullName>
    </alternativeName>
</protein>
<accession>A1TSZ6</accession>
<sequence>MATVSRRAYAEMFGPTVGDRVRLADTGLVAEVEQDFTLRAGGYGEEVKFGGGKTIRDGMAQSQRTRAEGAMDTVLTNALVIDHWGIVKADIGLKDGRVAAIGKAGNPDTQPGVDIVIGPGTEIISCEGNIVTAGGIDSHIHFICPQQIEEALASGITTMLGGGTGPATGTLATTCTPGPWHIERMLQAADAFPMNIGFLGKGNASLPAALHEQIEAGVIGLKLHEDWGTTPSAISNCMDVADATDTQVAIHSDTLNESGFVENTIAAVGGRGICAFHTEGAGGGHAPDILRVVGEDNFLPSSTNPTMPYTRNTLDEHVDMLMVCHHLDAAIAEDLAFAESRIRKETIAAEDILHDLGAISMMSSDSQAMGRVGEVILRTWQTADKMKQQRGALPEDGARNDNHRIKRYVAKYTINPAIAHGISHDVGSLEVGKWADIVVWKPAFFGVKPAMVLKGGSIAVAAMGDPNASIPTPQPVHYRPMFGAFGGSLARSSLTFVSQAAMAAGVRERFGLAKQLSAVRGIRGVRKQHMVHNGYTPRMEIDAQTYTVRADGQLLTCESATRLPLAQRYFLF</sequence>
<keyword id="KW-0963">Cytoplasm</keyword>
<keyword id="KW-0378">Hydrolase</keyword>
<keyword id="KW-0479">Metal-binding</keyword>
<keyword id="KW-0533">Nickel</keyword>
<comment type="catalytic activity">
    <reaction evidence="1">
        <text>urea + 2 H2O + H(+) = hydrogencarbonate + 2 NH4(+)</text>
        <dbReference type="Rhea" id="RHEA:20557"/>
        <dbReference type="ChEBI" id="CHEBI:15377"/>
        <dbReference type="ChEBI" id="CHEBI:15378"/>
        <dbReference type="ChEBI" id="CHEBI:16199"/>
        <dbReference type="ChEBI" id="CHEBI:17544"/>
        <dbReference type="ChEBI" id="CHEBI:28938"/>
        <dbReference type="EC" id="3.5.1.5"/>
    </reaction>
</comment>
<comment type="cofactor">
    <cofactor evidence="1">
        <name>Ni cation</name>
        <dbReference type="ChEBI" id="CHEBI:25516"/>
    </cofactor>
    <text evidence="1">Binds 2 nickel ions per subunit.</text>
</comment>
<comment type="pathway">
    <text evidence="1">Nitrogen metabolism; urea degradation; CO(2) and NH(3) from urea (urease route): step 1/1.</text>
</comment>
<comment type="subunit">
    <text evidence="1">Heterotrimer of UreA (gamma), UreB (beta) and UreC (alpha) subunits. Three heterotrimers associate to form the active enzyme.</text>
</comment>
<comment type="subcellular location">
    <subcellularLocation>
        <location evidence="1">Cytoplasm</location>
    </subcellularLocation>
</comment>
<comment type="PTM">
    <text evidence="1">Carboxylation allows a single lysine to coordinate two nickel ions.</text>
</comment>
<comment type="similarity">
    <text evidence="1">Belongs to the metallo-dependent hydrolases superfamily. Urease alpha subunit family.</text>
</comment>
<evidence type="ECO:0000255" key="1">
    <source>
        <dbReference type="HAMAP-Rule" id="MF_01953"/>
    </source>
</evidence>